<accession>P29888</accession>
<comment type="function">
    <text evidence="1">Stimulates increases in peripheral microtubule dynamics and may increase the motility of the infected cells, contributing to cell-to-cell spread of the virus. Seems to inhibit the signaling via the GTPase RHOA and DIAPH1/mDia.</text>
</comment>
<comment type="induction">
    <text evidence="1">Expressed in the late phase of the viral replicative cycle.</text>
</comment>
<comment type="similarity">
    <text evidence="2">Belongs to the orthopoxvirus OPG055 family.</text>
</comment>
<dbReference type="EMBL" id="M57977">
    <property type="protein sequence ID" value="AAA48287.1"/>
    <property type="molecule type" value="Genomic_DNA"/>
</dbReference>
<dbReference type="SMR" id="P29888"/>
<dbReference type="InterPro" id="IPR007027">
    <property type="entry name" value="Poxvirus_F11"/>
</dbReference>
<dbReference type="Pfam" id="PF04943">
    <property type="entry name" value="Pox_F11"/>
    <property type="match status" value="1"/>
</dbReference>
<dbReference type="PIRSF" id="PIRSF015981">
    <property type="entry name" value="VAC_F11L"/>
    <property type="match status" value="1"/>
</dbReference>
<organismHost>
    <name type="scientific">Homo sapiens</name>
    <name type="common">Human</name>
    <dbReference type="NCBI Taxonomy" id="9606"/>
</organismHost>
<name>PG055_VACCP</name>
<protein>
    <recommendedName>
        <fullName>Protein OPG055</fullName>
    </recommendedName>
    <alternativeName>
        <fullName>Protein F11</fullName>
    </alternativeName>
    <alternativeName>
        <fullName>Protein F7</fullName>
    </alternativeName>
</protein>
<gene>
    <name type="primary">OPG055</name>
    <name type="ORF">F7</name>
</gene>
<feature type="chain" id="PRO_0000099499" description="Protein OPG055">
    <location>
        <begin position="1"/>
        <end position="337"/>
    </location>
</feature>
<reference key="1">
    <citation type="journal article" date="1988" name="Biotekhnologiya">
        <title>Structural-functional organization of segment of vaccinia virus genome.</title>
        <authorList>
            <person name="Mikryukov N.N."/>
            <person name="Chizhikov V.E."/>
            <person name="Prikhod'Ko G.G."/>
            <person name="Urmmanov I.M."/>
            <person name="Serpinskii O.I."/>
            <person name="Blinov V.M."/>
            <person name="Nikulin A.E."/>
            <person name="Vasilenko S.K."/>
        </authorList>
    </citation>
    <scope>NUCLEOTIDE SEQUENCE [GENOMIC DNA]</scope>
</reference>
<organism>
    <name type="scientific">Vaccinia virus (strain L-IVP)</name>
    <name type="common">VACV</name>
    <dbReference type="NCBI Taxonomy" id="31531"/>
    <lineage>
        <taxon>Viruses</taxon>
        <taxon>Varidnaviria</taxon>
        <taxon>Bamfordvirae</taxon>
        <taxon>Nucleocytoviricota</taxon>
        <taxon>Pokkesviricetes</taxon>
        <taxon>Chitovirales</taxon>
        <taxon>Poxviridae</taxon>
        <taxon>Chordopoxvirinae</taxon>
        <taxon>Orthopoxvirus</taxon>
        <taxon>Vaccinia virus</taxon>
    </lineage>
</organism>
<keyword id="KW-0426">Late protein</keyword>
<evidence type="ECO:0000250" key="1">
    <source>
        <dbReference type="UniProtKB" id="Q80HX7"/>
    </source>
</evidence>
<evidence type="ECO:0000305" key="2"/>
<proteinExistence type="inferred from homology"/>
<sequence length="337" mass="37757">MGFCIPSRSKMLKRGSRKSSSILARRPTPKKMNIVTDLENRLKKNSYIENTNQGNILMDSIFVSTMPVETLFGSYITDDYELKDLLNVTYNIKPDIVPDIKLDAVLDRDGNFRPADCFLVKLKHRDGFTKGALYLGHSAGFTATICLKNEGVSGLYIPGASVIRSNICQGDTVSRSSRGVQFLPQIGGEAIFLIVSLCPTKKLVETGFVIPEISSNDNAKIAARILSEKRKDTIAHIDTLIQHRQQLELAYYNSCMLTEFLHYCNSYAGTIKESLLKETIQKDINITHTNITTLLNETAKVIKLVKSLVDKEDTDIVNNFITKEIKTVEVLKQRQNS</sequence>